<dbReference type="EMBL" id="JH725151">
    <property type="protein sequence ID" value="EJP70102.1"/>
    <property type="molecule type" value="Genomic_DNA"/>
</dbReference>
<dbReference type="RefSeq" id="XP_008594290.1">
    <property type="nucleotide sequence ID" value="XM_008596068.1"/>
</dbReference>
<dbReference type="SMR" id="J4UVD7"/>
<dbReference type="STRING" id="655819.J4UVD7"/>
<dbReference type="GeneID" id="19883983"/>
<dbReference type="HOGENOM" id="CLU_030977_1_0_1"/>
<dbReference type="InParanoid" id="J4UVD7"/>
<dbReference type="OrthoDB" id="5874at474943"/>
<dbReference type="Proteomes" id="UP000002762">
    <property type="component" value="Unassembled WGS sequence"/>
</dbReference>
<dbReference type="GO" id="GO:0000785">
    <property type="term" value="C:chromatin"/>
    <property type="evidence" value="ECO:0007669"/>
    <property type="project" value="TreeGrafter"/>
</dbReference>
<dbReference type="GO" id="GO:0005634">
    <property type="term" value="C:nucleus"/>
    <property type="evidence" value="ECO:0007669"/>
    <property type="project" value="UniProtKB-SubCell"/>
</dbReference>
<dbReference type="GO" id="GO:0000981">
    <property type="term" value="F:DNA-binding transcription factor activity, RNA polymerase II-specific"/>
    <property type="evidence" value="ECO:0007669"/>
    <property type="project" value="InterPro"/>
</dbReference>
<dbReference type="GO" id="GO:0000978">
    <property type="term" value="F:RNA polymerase II cis-regulatory region sequence-specific DNA binding"/>
    <property type="evidence" value="ECO:0007669"/>
    <property type="project" value="InterPro"/>
</dbReference>
<dbReference type="GO" id="GO:0008270">
    <property type="term" value="F:zinc ion binding"/>
    <property type="evidence" value="ECO:0007669"/>
    <property type="project" value="UniProtKB-KW"/>
</dbReference>
<dbReference type="FunFam" id="3.30.160.60:FF:000141">
    <property type="entry name" value="C2H2 zinc finger protein"/>
    <property type="match status" value="1"/>
</dbReference>
<dbReference type="FunFam" id="3.30.160.60:FF:000243">
    <property type="entry name" value="Probable transcription factor steA"/>
    <property type="match status" value="1"/>
</dbReference>
<dbReference type="Gene3D" id="3.30.160.60">
    <property type="entry name" value="Classic Zinc Finger"/>
    <property type="match status" value="2"/>
</dbReference>
<dbReference type="InterPro" id="IPR051059">
    <property type="entry name" value="VerF-like"/>
</dbReference>
<dbReference type="InterPro" id="IPR036236">
    <property type="entry name" value="Znf_C2H2_sf"/>
</dbReference>
<dbReference type="InterPro" id="IPR013087">
    <property type="entry name" value="Znf_C2H2_type"/>
</dbReference>
<dbReference type="PANTHER" id="PTHR40626">
    <property type="entry name" value="MIP31509P"/>
    <property type="match status" value="1"/>
</dbReference>
<dbReference type="PANTHER" id="PTHR40626:SF13">
    <property type="entry name" value="RESPIRATION FACTOR 2-RELATED"/>
    <property type="match status" value="1"/>
</dbReference>
<dbReference type="Pfam" id="PF00096">
    <property type="entry name" value="zf-C2H2"/>
    <property type="match status" value="2"/>
</dbReference>
<dbReference type="SMART" id="SM00355">
    <property type="entry name" value="ZnF_C2H2"/>
    <property type="match status" value="2"/>
</dbReference>
<dbReference type="SUPFAM" id="SSF57667">
    <property type="entry name" value="beta-beta-alpha zinc fingers"/>
    <property type="match status" value="1"/>
</dbReference>
<dbReference type="PROSITE" id="PS00028">
    <property type="entry name" value="ZINC_FINGER_C2H2_1"/>
    <property type="match status" value="2"/>
</dbReference>
<dbReference type="PROSITE" id="PS50157">
    <property type="entry name" value="ZINC_FINGER_C2H2_2"/>
    <property type="match status" value="2"/>
</dbReference>
<reference key="1">
    <citation type="journal article" date="2012" name="Sci. Rep.">
        <title>Genomic perspectives on the evolution of fungal entomopathogenicity in Beauveria bassiana.</title>
        <authorList>
            <person name="Xiao G."/>
            <person name="Ying S.-H."/>
            <person name="Zheng P."/>
            <person name="Wang Z.-L."/>
            <person name="Zhang S."/>
            <person name="Xie X.-Q."/>
            <person name="Shang Y."/>
            <person name="St Leger R.J."/>
            <person name="Zhao G.-P."/>
            <person name="Wang C."/>
            <person name="Feng M.-G."/>
        </authorList>
    </citation>
    <scope>NUCLEOTIDE SEQUENCE [LARGE SCALE GENOMIC DNA]</scope>
    <source>
        <strain>ARSEF 2860</strain>
    </source>
</reference>
<reference key="2">
    <citation type="journal article" date="2013" name="Fungal Genet. Biol.">
        <title>Insight into the transcriptional regulation of Msn2 required for conidiation, multi-stress responses and virulence of two entomopathogenic fungi.</title>
        <authorList>
            <person name="Liu Q."/>
            <person name="Ying S.H."/>
            <person name="Li J.G."/>
            <person name="Tian C.G."/>
            <person name="Feng M.G."/>
        </authorList>
    </citation>
    <scope>FUNCTION</scope>
    <scope>DISRUPTION PHENOTYPE</scope>
</reference>
<reference key="3">
    <citation type="journal article" date="2015" name="Environ. Microbiol.">
        <title>Bbmsn2 acts as a pH-dependent negative regulator of secondary metabolite production in the entomopathogenic fungus Beauveria bassiana.</title>
        <authorList>
            <person name="Luo Z."/>
            <person name="Li Y."/>
            <person name="Mousa J."/>
            <person name="Bruner S."/>
            <person name="Zhang Y."/>
            <person name="Pei Y."/>
            <person name="Keyhani N.O."/>
        </authorList>
    </citation>
    <scope>FUNCTION</scope>
    <scope>DISRUPTION PHENOTYPE</scope>
</reference>
<reference key="4">
    <citation type="journal article" date="2021" name="Front. Cell. Infect. Microbiol.">
        <title>The Msn2 Transcription Factor Regulates Acaricidal Virulence in the Fungal Pathogen Beauveria bassiana.</title>
        <authorList>
            <person name="Muniz E.R."/>
            <person name="Ribeiro-Silva C.S."/>
            <person name="Arruda W."/>
            <person name="Keyhani N.O."/>
            <person name="Fernandes E.K.K."/>
        </authorList>
    </citation>
    <scope>FUNCTION</scope>
    <scope>DISRUPTION PHENOTYPE</scope>
</reference>
<accession>J4UVD7</accession>
<organism>
    <name type="scientific">Beauveria bassiana (strain ARSEF 2860)</name>
    <name type="common">White muscardine disease fungus</name>
    <name type="synonym">Tritirachium shiotae</name>
    <dbReference type="NCBI Taxonomy" id="655819"/>
    <lineage>
        <taxon>Eukaryota</taxon>
        <taxon>Fungi</taxon>
        <taxon>Dikarya</taxon>
        <taxon>Ascomycota</taxon>
        <taxon>Pezizomycotina</taxon>
        <taxon>Sordariomycetes</taxon>
        <taxon>Hypocreomycetidae</taxon>
        <taxon>Hypocreales</taxon>
        <taxon>Cordycipitaceae</taxon>
        <taxon>Beauveria</taxon>
    </lineage>
</organism>
<name>MSN2_BEAB2</name>
<keyword id="KW-0963">Cytoplasm</keyword>
<keyword id="KW-0479">Metal-binding</keyword>
<keyword id="KW-0539">Nucleus</keyword>
<keyword id="KW-1185">Reference proteome</keyword>
<keyword id="KW-0677">Repeat</keyword>
<keyword id="KW-0804">Transcription</keyword>
<keyword id="KW-0805">Transcription regulation</keyword>
<keyword id="KW-0843">Virulence</keyword>
<keyword id="KW-0862">Zinc</keyword>
<keyword id="KW-0863">Zinc-finger</keyword>
<comment type="function">
    <text evidence="3 4 5">Transcription factor that acts as a key downstream transcription factor in the HOG1-MAPK pathway (PubMed:23466345). Plays crucial roles in the regulation of conidiation, virulence and multi-stress responses (PubMed:23466345). Acts as a negative regulator of proteases, lipases, as well as of the red-pigmented oosporein production, and contributes to virulence and growth in response to external pH (PubMed:24965521). Contributes to the ability to infect Rhipicephalus microplus (Acari, Ixodidae) via the cuticle-penetration requiring route involving proteolytic activity at the host cuticle (PubMed:34354961). Does not seem to be involved in subsequent growth and proliferation once the tick cuticle has been breached (PubMed:34354961).</text>
</comment>
<comment type="subcellular location">
    <subcellularLocation>
        <location evidence="1">Nucleus</location>
    </subcellularLocation>
    <subcellularLocation>
        <location evidence="1">Cytoplasm</location>
    </subcellularLocation>
</comment>
<comment type="disruption phenotype">
    <text evidence="3 4 5">Shows remarkable defects in conidial yield and virulence (PubMed:23466345, PubMed:24965521, PubMed:34354961). Decreases tolerances to hyperosmolarity, oxidation, carbendazim, cell wall perturbing and high temperature at 34 degrees Celsius (PubMed:23466345). Significantly reduces the resistance of conidia to oxidation, hyperosmolarity, wet-heat stress at 45 degrees Celsius and UV-B irradiation (PubMed:23466345). Leads th repression of conidiation- and virulence-associated genes and affects also expression of stress-responsive effector genes and cellular signaling factors (PubMed:23466345). Displays a pH-dependent growth phenotype, with little growth seen at pH &lt; 5.0 but, better growth at alkaline conditions (pH &gt; 8.0) (PubMed:24965521). Impairs virulence in both topical and intrahaemocoel injection bioassays against Galleria mellonella (PubMed:24965521). Lowers the proteolytic activity on Rhipicephalus microplus cuticle and reduces virulence against R.microplus, with delayed fungal penetration and decreased protease production on the tick cuticle (PubMed:34354961).</text>
</comment>
<sequence>MEAAMLQPQSVAQAFLNNREFKSDARKAYLFQQMPATPIYSRPGSSCSQPPTLYSNGAHKTTMLDADVYDSHFPSTPPLSTSGSAIGSPKMFDALQTPINPMFSGLDGFPGKDLFDSVETSVLDWSSCASPPMTPVYIASHPLALQQSTSDLVSMTSCPSLSPSPSPAYARSIASEQDVDFCDPRNLTVSTGNPTLAPEFTLSNMGDADVKGANARPTFDFNPAISHDLPSFQNLDDLDSEDDFSNLVNIEATATGETTRPRACTGSSVVSLGHCSFDDELAFDDNDTFSFLPFPSADATTDVDDGHRDKKLKTSPKNDAVVASEPTDDEVEATSAASVSSESTVSSPSDDNSPTVSAPSRRGRKQSLTEDPSKTFVCDLCNRRFRRQEHLKRHYRSLHTQEKPFECNECGKKFSRSDNLAQHARTHSGGAIVMDLIEDHASHFDGSAMPVNAGDEFSYGKVMFQIGSEVSEITEDASDNKKKRKRTD</sequence>
<feature type="chain" id="PRO_0000462285" description="C2H2-type transcription factor MSN2">
    <location>
        <begin position="1"/>
        <end position="488"/>
    </location>
</feature>
<feature type="zinc finger region" description="C2H2-type 1" evidence="2">
    <location>
        <begin position="376"/>
        <end position="399"/>
    </location>
</feature>
<feature type="zinc finger region" description="C2H2-type 2" evidence="2">
    <location>
        <begin position="405"/>
        <end position="427"/>
    </location>
</feature>
<proteinExistence type="inferred from homology"/>
<gene>
    <name evidence="6" type="primary">MSN2</name>
    <name type="ORF">BBA_00971</name>
</gene>
<evidence type="ECO:0000250" key="1">
    <source>
        <dbReference type="UniProtKB" id="G4NBR8"/>
    </source>
</evidence>
<evidence type="ECO:0000255" key="2">
    <source>
        <dbReference type="PROSITE-ProRule" id="PRU00042"/>
    </source>
</evidence>
<evidence type="ECO:0000269" key="3">
    <source>
    </source>
</evidence>
<evidence type="ECO:0000269" key="4">
    <source>
    </source>
</evidence>
<evidence type="ECO:0000269" key="5">
    <source>
    </source>
</evidence>
<evidence type="ECO:0000303" key="6">
    <source>
    </source>
</evidence>
<protein>
    <recommendedName>
        <fullName evidence="6">C2H2-type transcription factor MSN2</fullName>
    </recommendedName>
</protein>